<protein>
    <recommendedName>
        <fullName>Alpha-conotoxin-like Mr1.2</fullName>
    </recommendedName>
</protein>
<accession>A6M934</accession>
<dbReference type="EMBL" id="DQ359140">
    <property type="protein sequence ID" value="ABD48791.1"/>
    <property type="molecule type" value="mRNA"/>
</dbReference>
<dbReference type="ConoServer" id="127">
    <property type="toxin name" value="Mr1.2 precursor"/>
</dbReference>
<dbReference type="GO" id="GO:0005576">
    <property type="term" value="C:extracellular region"/>
    <property type="evidence" value="ECO:0007669"/>
    <property type="project" value="UniProtKB-SubCell"/>
</dbReference>
<dbReference type="GO" id="GO:0035792">
    <property type="term" value="C:host cell postsynaptic membrane"/>
    <property type="evidence" value="ECO:0007669"/>
    <property type="project" value="UniProtKB-KW"/>
</dbReference>
<dbReference type="GO" id="GO:0030550">
    <property type="term" value="F:acetylcholine receptor inhibitor activity"/>
    <property type="evidence" value="ECO:0007669"/>
    <property type="project" value="UniProtKB-KW"/>
</dbReference>
<dbReference type="GO" id="GO:0099106">
    <property type="term" value="F:ion channel regulator activity"/>
    <property type="evidence" value="ECO:0007669"/>
    <property type="project" value="UniProtKB-KW"/>
</dbReference>
<dbReference type="GO" id="GO:0090729">
    <property type="term" value="F:toxin activity"/>
    <property type="evidence" value="ECO:0007669"/>
    <property type="project" value="UniProtKB-KW"/>
</dbReference>
<dbReference type="InterPro" id="IPR009958">
    <property type="entry name" value="Conotoxin_a-typ"/>
</dbReference>
<dbReference type="Pfam" id="PF07365">
    <property type="entry name" value="Toxin_8"/>
    <property type="match status" value="1"/>
</dbReference>
<reference key="1">
    <citation type="journal article" date="2007" name="Toxicon">
        <title>From the identification of gene organization of alpha conotoxins to the cloning of novel toxins.</title>
        <authorList>
            <person name="Yuan D.-D."/>
            <person name="Han Y.-H."/>
            <person name="Wang C.-G."/>
            <person name="Chi C.-W."/>
        </authorList>
    </citation>
    <scope>NUCLEOTIDE SEQUENCE [MRNA]</scope>
    <source>
        <tissue>Venom duct</tissue>
    </source>
</reference>
<evidence type="ECO:0000250" key="1"/>
<evidence type="ECO:0000250" key="2">
    <source>
        <dbReference type="UniProtKB" id="P56636"/>
    </source>
</evidence>
<evidence type="ECO:0000255" key="3"/>
<evidence type="ECO:0000305" key="4"/>
<evidence type="ECO:0000305" key="5">
    <source>
    </source>
</evidence>
<feature type="signal peptide" evidence="3">
    <location>
        <begin position="1"/>
        <end position="21"/>
    </location>
</feature>
<feature type="propeptide" id="PRO_0000370661" evidence="1">
    <location>
        <begin position="22"/>
        <end position="48"/>
    </location>
</feature>
<feature type="peptide" id="PRO_0000370662" description="Alpha-conotoxin-like Mr1.2">
    <location>
        <begin position="49"/>
        <end position="65"/>
    </location>
</feature>
<feature type="region of interest" description="Ser-Xaa-Pro motif, crucial for potent interaction with nAChR" evidence="2">
    <location>
        <begin position="52"/>
        <end position="54"/>
    </location>
</feature>
<feature type="modified residue" description="Asparagine amide" evidence="1">
    <location>
        <position position="65"/>
    </location>
</feature>
<feature type="disulfide bond" evidence="2">
    <location>
        <begin position="50"/>
        <end position="56"/>
    </location>
</feature>
<feature type="disulfide bond" evidence="2">
    <location>
        <begin position="51"/>
        <end position="64"/>
    </location>
</feature>
<name>CA12_CONMR</name>
<organism>
    <name type="scientific">Conus marmoreus</name>
    <name type="common">Marble cone</name>
    <dbReference type="NCBI Taxonomy" id="42752"/>
    <lineage>
        <taxon>Eukaryota</taxon>
        <taxon>Metazoa</taxon>
        <taxon>Spiralia</taxon>
        <taxon>Lophotrochozoa</taxon>
        <taxon>Mollusca</taxon>
        <taxon>Gastropoda</taxon>
        <taxon>Caenogastropoda</taxon>
        <taxon>Neogastropoda</taxon>
        <taxon>Conoidea</taxon>
        <taxon>Conidae</taxon>
        <taxon>Conus</taxon>
    </lineage>
</organism>
<comment type="function">
    <text evidence="1">Alpha-conotoxins act on postsynaptic membranes, they bind to the nicotinic acetylcholine receptors (nAChR) and thus inhibit them.</text>
</comment>
<comment type="subcellular location">
    <subcellularLocation>
        <location evidence="5">Secreted</location>
    </subcellularLocation>
</comment>
<comment type="tissue specificity">
    <text evidence="5">Expressed by the venom duct.</text>
</comment>
<comment type="domain">
    <text evidence="4">The cysteine framework is I (CC-C-C). Alpha4/7 pattern.</text>
</comment>
<comment type="similarity">
    <text evidence="4">Belongs to the conotoxin A superfamily.</text>
</comment>
<proteinExistence type="inferred from homology"/>
<keyword id="KW-0008">Acetylcholine receptor inhibiting toxin</keyword>
<keyword id="KW-0027">Amidation</keyword>
<keyword id="KW-1015">Disulfide bond</keyword>
<keyword id="KW-0872">Ion channel impairing toxin</keyword>
<keyword id="KW-0528">Neurotoxin</keyword>
<keyword id="KW-0629">Postsynaptic neurotoxin</keyword>
<keyword id="KW-0964">Secreted</keyword>
<keyword id="KW-0732">Signal</keyword>
<keyword id="KW-0800">Toxin</keyword>
<sequence>MGMRMMFTVFLLVVLATTVVSFTSDRGSDGRNAAAKDKASDLVALTVKGCCSNPPCYANNQAYCNGRR</sequence>